<reference key="1">
    <citation type="journal article" date="1999" name="Nat. Genet.">
        <title>Comparative genomes of Chlamydia pneumoniae and C. trachomatis.</title>
        <authorList>
            <person name="Kalman S."/>
            <person name="Mitchell W.P."/>
            <person name="Marathe R."/>
            <person name="Lammel C.J."/>
            <person name="Fan J."/>
            <person name="Hyman R.W."/>
            <person name="Olinger L."/>
            <person name="Grimwood J."/>
            <person name="Davis R.W."/>
            <person name="Stephens R.S."/>
        </authorList>
    </citation>
    <scope>NUCLEOTIDE SEQUENCE [LARGE SCALE GENOMIC DNA]</scope>
    <source>
        <strain>CWL029</strain>
    </source>
</reference>
<reference key="2">
    <citation type="journal article" date="2000" name="Nucleic Acids Res.">
        <title>Genome sequences of Chlamydia trachomatis MoPn and Chlamydia pneumoniae AR39.</title>
        <authorList>
            <person name="Read T.D."/>
            <person name="Brunham R.C."/>
            <person name="Shen C."/>
            <person name="Gill S.R."/>
            <person name="Heidelberg J.F."/>
            <person name="White O."/>
            <person name="Hickey E.K."/>
            <person name="Peterson J.D."/>
            <person name="Utterback T.R."/>
            <person name="Berry K.J."/>
            <person name="Bass S."/>
            <person name="Linher K.D."/>
            <person name="Weidman J.F."/>
            <person name="Khouri H.M."/>
            <person name="Craven B."/>
            <person name="Bowman C."/>
            <person name="Dodson R.J."/>
            <person name="Gwinn M.L."/>
            <person name="Nelson W.C."/>
            <person name="DeBoy R.T."/>
            <person name="Kolonay J.F."/>
            <person name="McClarty G."/>
            <person name="Salzberg S.L."/>
            <person name="Eisen J.A."/>
            <person name="Fraser C.M."/>
        </authorList>
    </citation>
    <scope>NUCLEOTIDE SEQUENCE [LARGE SCALE GENOMIC DNA]</scope>
    <source>
        <strain>AR39</strain>
    </source>
</reference>
<reference key="3">
    <citation type="journal article" date="2000" name="Nucleic Acids Res.">
        <title>Comparison of whole genome sequences of Chlamydia pneumoniae J138 from Japan and CWL029 from USA.</title>
        <authorList>
            <person name="Shirai M."/>
            <person name="Hirakawa H."/>
            <person name="Kimoto M."/>
            <person name="Tabuchi M."/>
            <person name="Kishi F."/>
            <person name="Ouchi K."/>
            <person name="Shiba T."/>
            <person name="Ishii K."/>
            <person name="Hattori M."/>
            <person name="Kuhara S."/>
            <person name="Nakazawa T."/>
        </authorList>
    </citation>
    <scope>NUCLEOTIDE SEQUENCE [LARGE SCALE GENOMIC DNA]</scope>
    <source>
        <strain>J138</strain>
    </source>
</reference>
<reference key="4">
    <citation type="submission" date="2002-05" db="EMBL/GenBank/DDBJ databases">
        <title>The genome sequence of Chlamydia pneumoniae TW183 and comparison with other Chlamydia strains based on whole genome sequence analysis.</title>
        <authorList>
            <person name="Geng M.M."/>
            <person name="Schuhmacher A."/>
            <person name="Muehldorfer I."/>
            <person name="Bensch K.W."/>
            <person name="Schaefer K.P."/>
            <person name="Schneider S."/>
            <person name="Pohl T."/>
            <person name="Essig A."/>
            <person name="Marre R."/>
            <person name="Melchers K."/>
        </authorList>
    </citation>
    <scope>NUCLEOTIDE SEQUENCE [LARGE SCALE GENOMIC DNA]</scope>
    <source>
        <strain>TW-183</strain>
    </source>
</reference>
<accession>Q9Z8C7</accession>
<accession>Q9JQB6</accession>
<comment type="function">
    <text evidence="1">Histone-like DNA-binding protein which is capable of wrapping DNA to stabilize it, and thus to prevent its denaturation under extreme environmental conditions.</text>
</comment>
<comment type="similarity">
    <text evidence="2">Belongs to the bacterial histone-like protein family.</text>
</comment>
<proteinExistence type="inferred from homology"/>
<keyword id="KW-0226">DNA condensation</keyword>
<keyword id="KW-0238">DNA-binding</keyword>
<feature type="chain" id="PRO_0000104930" description="Probable DNA-binding protein HU">
    <location>
        <begin position="1"/>
        <end position="100"/>
    </location>
</feature>
<dbReference type="EMBL" id="AE001363">
    <property type="protein sequence ID" value="AAD18560.1"/>
    <property type="molecule type" value="Genomic_DNA"/>
</dbReference>
<dbReference type="EMBL" id="AE002161">
    <property type="protein sequence ID" value="AAF38192.1"/>
    <property type="molecule type" value="Genomic_DNA"/>
</dbReference>
<dbReference type="EMBL" id="BA000008">
    <property type="protein sequence ID" value="BAA98624.1"/>
    <property type="molecule type" value="Genomic_DNA"/>
</dbReference>
<dbReference type="EMBL" id="AE009440">
    <property type="protein sequence ID" value="AAP98363.1"/>
    <property type="molecule type" value="Genomic_DNA"/>
</dbReference>
<dbReference type="PIR" id="B72080">
    <property type="entry name" value="B72080"/>
</dbReference>
<dbReference type="PIR" id="F86542">
    <property type="entry name" value="F86542"/>
</dbReference>
<dbReference type="RefSeq" id="NP_224616.1">
    <property type="nucleotide sequence ID" value="NC_000922.1"/>
</dbReference>
<dbReference type="RefSeq" id="WP_010883059.1">
    <property type="nucleotide sequence ID" value="NZ_LN847257.1"/>
</dbReference>
<dbReference type="SMR" id="Q9Z8C7"/>
<dbReference type="STRING" id="406984.CPK_ORF00925"/>
<dbReference type="GeneID" id="45050462"/>
<dbReference type="KEGG" id="cpa:CP_0338"/>
<dbReference type="KEGG" id="cpj:himD"/>
<dbReference type="KEGG" id="cpn:CPn_0416"/>
<dbReference type="KEGG" id="cpt:CpB0432"/>
<dbReference type="PATRIC" id="fig|115713.3.peg.460"/>
<dbReference type="eggNOG" id="COG0776">
    <property type="taxonomic scope" value="Bacteria"/>
</dbReference>
<dbReference type="HOGENOM" id="CLU_105066_2_3_0"/>
<dbReference type="OMA" id="ISQEKQC"/>
<dbReference type="OrthoDB" id="9799835at2"/>
<dbReference type="Proteomes" id="UP000000583">
    <property type="component" value="Chromosome"/>
</dbReference>
<dbReference type="Proteomes" id="UP000000801">
    <property type="component" value="Chromosome"/>
</dbReference>
<dbReference type="GO" id="GO:0005829">
    <property type="term" value="C:cytosol"/>
    <property type="evidence" value="ECO:0007669"/>
    <property type="project" value="TreeGrafter"/>
</dbReference>
<dbReference type="GO" id="GO:0003677">
    <property type="term" value="F:DNA binding"/>
    <property type="evidence" value="ECO:0007669"/>
    <property type="project" value="UniProtKB-KW"/>
</dbReference>
<dbReference type="GO" id="GO:0030527">
    <property type="term" value="F:structural constituent of chromatin"/>
    <property type="evidence" value="ECO:0007669"/>
    <property type="project" value="InterPro"/>
</dbReference>
<dbReference type="GO" id="GO:0030261">
    <property type="term" value="P:chromosome condensation"/>
    <property type="evidence" value="ECO:0007669"/>
    <property type="project" value="UniProtKB-KW"/>
</dbReference>
<dbReference type="CDD" id="cd13836">
    <property type="entry name" value="IHF_B"/>
    <property type="match status" value="1"/>
</dbReference>
<dbReference type="Gene3D" id="4.10.520.10">
    <property type="entry name" value="IHF-like DNA-binding proteins"/>
    <property type="match status" value="1"/>
</dbReference>
<dbReference type="InterPro" id="IPR000119">
    <property type="entry name" value="Hist_DNA-bd"/>
</dbReference>
<dbReference type="InterPro" id="IPR010992">
    <property type="entry name" value="IHF-like_DNA-bd_dom_sf"/>
</dbReference>
<dbReference type="PANTHER" id="PTHR33175">
    <property type="entry name" value="DNA-BINDING PROTEIN HU"/>
    <property type="match status" value="1"/>
</dbReference>
<dbReference type="PANTHER" id="PTHR33175:SF2">
    <property type="entry name" value="INTEGRATION HOST FACTOR SUBUNIT ALPHA"/>
    <property type="match status" value="1"/>
</dbReference>
<dbReference type="Pfam" id="PF00216">
    <property type="entry name" value="Bac_DNA_binding"/>
    <property type="match status" value="1"/>
</dbReference>
<dbReference type="SMART" id="SM00411">
    <property type="entry name" value="BHL"/>
    <property type="match status" value="1"/>
</dbReference>
<dbReference type="SUPFAM" id="SSF47729">
    <property type="entry name" value="IHF-like DNA-binding proteins"/>
    <property type="match status" value="1"/>
</dbReference>
<protein>
    <recommendedName>
        <fullName>Probable DNA-binding protein HU</fullName>
    </recommendedName>
</protein>
<gene>
    <name type="primary">hup</name>
    <name type="ordered locus">CPn_0416</name>
    <name type="ordered locus">CP_0338</name>
    <name type="ordered locus">CpB0432</name>
</gene>
<evidence type="ECO:0000250" key="1"/>
<evidence type="ECO:0000305" key="2"/>
<organism>
    <name type="scientific">Chlamydia pneumoniae</name>
    <name type="common">Chlamydophila pneumoniae</name>
    <dbReference type="NCBI Taxonomy" id="83558"/>
    <lineage>
        <taxon>Bacteria</taxon>
        <taxon>Pseudomonadati</taxon>
        <taxon>Chlamydiota</taxon>
        <taxon>Chlamydiia</taxon>
        <taxon>Chlamydiales</taxon>
        <taxon>Chlamydiaceae</taxon>
        <taxon>Chlamydia/Chlamydophila group</taxon>
        <taxon>Chlamydia</taxon>
    </lineage>
</organism>
<sequence length="100" mass="11474">MATMTKKKLISTISQDHKIHPNHVRTVIQNFLDKMTDALVKGDRLEFRDFGVLQVVERKPKVGRNPKNAAVPIHIPARRAVKFTPGKRMKRLIETPNKHS</sequence>
<name>DBH_CHLPN</name>